<reference key="1">
    <citation type="journal article" date="2008" name="PLoS Genet.">
        <title>Complete genome sequence of the complex carbohydrate-degrading marine bacterium, Saccharophagus degradans strain 2-40 T.</title>
        <authorList>
            <person name="Weiner R.M."/>
            <person name="Taylor L.E. II"/>
            <person name="Henrissat B."/>
            <person name="Hauser L."/>
            <person name="Land M."/>
            <person name="Coutinho P.M."/>
            <person name="Rancurel C."/>
            <person name="Saunders E.H."/>
            <person name="Longmire A.G."/>
            <person name="Zhang H."/>
            <person name="Bayer E.A."/>
            <person name="Gilbert H.J."/>
            <person name="Larimer F."/>
            <person name="Zhulin I.B."/>
            <person name="Ekborg N.A."/>
            <person name="Lamed R."/>
            <person name="Richardson P.M."/>
            <person name="Borovok I."/>
            <person name="Hutcheson S."/>
        </authorList>
    </citation>
    <scope>NUCLEOTIDE SEQUENCE [LARGE SCALE GENOMIC DNA]</scope>
    <source>
        <strain>2-40 / ATCC 43961 / DSM 17024</strain>
    </source>
</reference>
<dbReference type="EC" id="3.6.5.3" evidence="2"/>
<dbReference type="EMBL" id="CP000282">
    <property type="protein sequence ID" value="ABD80191.1"/>
    <property type="molecule type" value="Genomic_DNA"/>
</dbReference>
<dbReference type="EMBL" id="CP000282">
    <property type="protein sequence ID" value="ABD80193.1"/>
    <property type="molecule type" value="Genomic_DNA"/>
</dbReference>
<dbReference type="RefSeq" id="WP_011467412.1">
    <property type="nucleotide sequence ID" value="NC_007912.1"/>
</dbReference>
<dbReference type="SMR" id="Q21M86"/>
<dbReference type="STRING" id="203122.Sde_0929"/>
<dbReference type="GeneID" id="98612617"/>
<dbReference type="KEGG" id="sde:Sde_0929"/>
<dbReference type="KEGG" id="sde:Sde_0931"/>
<dbReference type="eggNOG" id="COG0050">
    <property type="taxonomic scope" value="Bacteria"/>
</dbReference>
<dbReference type="HOGENOM" id="CLU_007265_0_0_6"/>
<dbReference type="OrthoDB" id="9803139at2"/>
<dbReference type="Proteomes" id="UP000001947">
    <property type="component" value="Chromosome"/>
</dbReference>
<dbReference type="GO" id="GO:0005829">
    <property type="term" value="C:cytosol"/>
    <property type="evidence" value="ECO:0007669"/>
    <property type="project" value="TreeGrafter"/>
</dbReference>
<dbReference type="GO" id="GO:0005525">
    <property type="term" value="F:GTP binding"/>
    <property type="evidence" value="ECO:0007669"/>
    <property type="project" value="UniProtKB-UniRule"/>
</dbReference>
<dbReference type="GO" id="GO:0003924">
    <property type="term" value="F:GTPase activity"/>
    <property type="evidence" value="ECO:0007669"/>
    <property type="project" value="InterPro"/>
</dbReference>
<dbReference type="GO" id="GO:0097216">
    <property type="term" value="F:guanosine tetraphosphate binding"/>
    <property type="evidence" value="ECO:0007669"/>
    <property type="project" value="UniProtKB-ARBA"/>
</dbReference>
<dbReference type="GO" id="GO:0003746">
    <property type="term" value="F:translation elongation factor activity"/>
    <property type="evidence" value="ECO:0007669"/>
    <property type="project" value="UniProtKB-UniRule"/>
</dbReference>
<dbReference type="CDD" id="cd01884">
    <property type="entry name" value="EF_Tu"/>
    <property type="match status" value="1"/>
</dbReference>
<dbReference type="CDD" id="cd03697">
    <property type="entry name" value="EFTU_II"/>
    <property type="match status" value="1"/>
</dbReference>
<dbReference type="CDD" id="cd03707">
    <property type="entry name" value="EFTU_III"/>
    <property type="match status" value="1"/>
</dbReference>
<dbReference type="FunFam" id="2.40.30.10:FF:000001">
    <property type="entry name" value="Elongation factor Tu"/>
    <property type="match status" value="1"/>
</dbReference>
<dbReference type="FunFam" id="3.40.50.300:FF:000003">
    <property type="entry name" value="Elongation factor Tu"/>
    <property type="match status" value="1"/>
</dbReference>
<dbReference type="Gene3D" id="3.40.50.300">
    <property type="entry name" value="P-loop containing nucleotide triphosphate hydrolases"/>
    <property type="match status" value="1"/>
</dbReference>
<dbReference type="Gene3D" id="2.40.30.10">
    <property type="entry name" value="Translation factors"/>
    <property type="match status" value="2"/>
</dbReference>
<dbReference type="HAMAP" id="MF_00118_B">
    <property type="entry name" value="EF_Tu_B"/>
    <property type="match status" value="1"/>
</dbReference>
<dbReference type="InterPro" id="IPR041709">
    <property type="entry name" value="EF-Tu_GTP-bd"/>
</dbReference>
<dbReference type="InterPro" id="IPR050055">
    <property type="entry name" value="EF-Tu_GTPase"/>
</dbReference>
<dbReference type="InterPro" id="IPR004161">
    <property type="entry name" value="EFTu-like_2"/>
</dbReference>
<dbReference type="InterPro" id="IPR033720">
    <property type="entry name" value="EFTU_2"/>
</dbReference>
<dbReference type="InterPro" id="IPR031157">
    <property type="entry name" value="G_TR_CS"/>
</dbReference>
<dbReference type="InterPro" id="IPR027417">
    <property type="entry name" value="P-loop_NTPase"/>
</dbReference>
<dbReference type="InterPro" id="IPR005225">
    <property type="entry name" value="Small_GTP-bd"/>
</dbReference>
<dbReference type="InterPro" id="IPR000795">
    <property type="entry name" value="T_Tr_GTP-bd_dom"/>
</dbReference>
<dbReference type="InterPro" id="IPR009000">
    <property type="entry name" value="Transl_B-barrel_sf"/>
</dbReference>
<dbReference type="InterPro" id="IPR009001">
    <property type="entry name" value="Transl_elong_EF1A/Init_IF2_C"/>
</dbReference>
<dbReference type="InterPro" id="IPR004541">
    <property type="entry name" value="Transl_elong_EFTu/EF1A_bac/org"/>
</dbReference>
<dbReference type="InterPro" id="IPR004160">
    <property type="entry name" value="Transl_elong_EFTu/EF1A_C"/>
</dbReference>
<dbReference type="NCBIfam" id="TIGR00485">
    <property type="entry name" value="EF-Tu"/>
    <property type="match status" value="1"/>
</dbReference>
<dbReference type="NCBIfam" id="NF000766">
    <property type="entry name" value="PRK00049.1"/>
    <property type="match status" value="1"/>
</dbReference>
<dbReference type="NCBIfam" id="NF009372">
    <property type="entry name" value="PRK12735.1"/>
    <property type="match status" value="1"/>
</dbReference>
<dbReference type="NCBIfam" id="NF009373">
    <property type="entry name" value="PRK12736.1"/>
    <property type="match status" value="1"/>
</dbReference>
<dbReference type="NCBIfam" id="TIGR00231">
    <property type="entry name" value="small_GTP"/>
    <property type="match status" value="1"/>
</dbReference>
<dbReference type="PANTHER" id="PTHR43721:SF22">
    <property type="entry name" value="ELONGATION FACTOR TU, MITOCHONDRIAL"/>
    <property type="match status" value="1"/>
</dbReference>
<dbReference type="PANTHER" id="PTHR43721">
    <property type="entry name" value="ELONGATION FACTOR TU-RELATED"/>
    <property type="match status" value="1"/>
</dbReference>
<dbReference type="Pfam" id="PF00009">
    <property type="entry name" value="GTP_EFTU"/>
    <property type="match status" value="1"/>
</dbReference>
<dbReference type="Pfam" id="PF03144">
    <property type="entry name" value="GTP_EFTU_D2"/>
    <property type="match status" value="1"/>
</dbReference>
<dbReference type="Pfam" id="PF03143">
    <property type="entry name" value="GTP_EFTU_D3"/>
    <property type="match status" value="1"/>
</dbReference>
<dbReference type="PRINTS" id="PR00315">
    <property type="entry name" value="ELONGATNFCT"/>
</dbReference>
<dbReference type="SUPFAM" id="SSF50465">
    <property type="entry name" value="EF-Tu/eEF-1alpha/eIF2-gamma C-terminal domain"/>
    <property type="match status" value="1"/>
</dbReference>
<dbReference type="SUPFAM" id="SSF52540">
    <property type="entry name" value="P-loop containing nucleoside triphosphate hydrolases"/>
    <property type="match status" value="1"/>
</dbReference>
<dbReference type="SUPFAM" id="SSF50447">
    <property type="entry name" value="Translation proteins"/>
    <property type="match status" value="1"/>
</dbReference>
<dbReference type="PROSITE" id="PS00301">
    <property type="entry name" value="G_TR_1"/>
    <property type="match status" value="1"/>
</dbReference>
<dbReference type="PROSITE" id="PS51722">
    <property type="entry name" value="G_TR_2"/>
    <property type="match status" value="1"/>
</dbReference>
<accession>Q21M86</accession>
<sequence length="407" mass="44287">MAKEKFERNKPHVNVGTIGHVDHGKTTLTAALTRVCSEVWGGAAVAFDGIDNAPEERERGITIATSHVEYDSPIRHYAHVDCPGHADYVKNMITGAAQMDGAILVCGSTDGPMPQTREHILLSRQVGVPYIVVFLNKADLLAEDCGGVDSEEYAEMMELVEMELRELLDTYEFPGDDTPIIAGSALMALNGEDENELGTTAVKKLVEALDSYIPEPERAIDQPFLMPVEDVFSISGRGTVVTGRVERGIVKVGEELEIVGIRDTTKTTCTGVEMFRKLLDEGRAGENVGVLLRGTKRDDVERGQVLSKPGSVTPHTTFQSEIYVLSKDEGGRHTPFFKGYRPQFYFRTTDVTGACELPEGVEMVMPGDNVQMTVTLIAPIAMEEGLRFAIREGGRTVGAGVVAKIIA</sequence>
<feature type="chain" id="PRO_0000337510" description="Elongation factor Tu">
    <location>
        <begin position="1"/>
        <end position="407"/>
    </location>
</feature>
<feature type="domain" description="tr-type G">
    <location>
        <begin position="10"/>
        <end position="217"/>
    </location>
</feature>
<feature type="region of interest" description="G1" evidence="1">
    <location>
        <begin position="19"/>
        <end position="26"/>
    </location>
</feature>
<feature type="region of interest" description="G2" evidence="1">
    <location>
        <begin position="60"/>
        <end position="64"/>
    </location>
</feature>
<feature type="region of interest" description="G3" evidence="1">
    <location>
        <begin position="81"/>
        <end position="84"/>
    </location>
</feature>
<feature type="region of interest" description="G4" evidence="1">
    <location>
        <begin position="136"/>
        <end position="139"/>
    </location>
</feature>
<feature type="region of interest" description="G5" evidence="1">
    <location>
        <begin position="184"/>
        <end position="186"/>
    </location>
</feature>
<feature type="binding site" evidence="2">
    <location>
        <begin position="19"/>
        <end position="26"/>
    </location>
    <ligand>
        <name>GTP</name>
        <dbReference type="ChEBI" id="CHEBI:37565"/>
    </ligand>
</feature>
<feature type="binding site" evidence="2">
    <location>
        <position position="26"/>
    </location>
    <ligand>
        <name>Mg(2+)</name>
        <dbReference type="ChEBI" id="CHEBI:18420"/>
    </ligand>
</feature>
<feature type="binding site" evidence="2">
    <location>
        <begin position="81"/>
        <end position="85"/>
    </location>
    <ligand>
        <name>GTP</name>
        <dbReference type="ChEBI" id="CHEBI:37565"/>
    </ligand>
</feature>
<feature type="binding site" evidence="2">
    <location>
        <begin position="136"/>
        <end position="139"/>
    </location>
    <ligand>
        <name>GTP</name>
        <dbReference type="ChEBI" id="CHEBI:37565"/>
    </ligand>
</feature>
<gene>
    <name evidence="2" type="primary">tuf1</name>
    <name type="ordered locus">Sde_0929</name>
</gene>
<gene>
    <name evidence="2" type="primary">tuf2</name>
    <name type="ordered locus">Sde_0931</name>
</gene>
<name>EFTU_SACD2</name>
<evidence type="ECO:0000250" key="1"/>
<evidence type="ECO:0000255" key="2">
    <source>
        <dbReference type="HAMAP-Rule" id="MF_00118"/>
    </source>
</evidence>
<comment type="function">
    <text evidence="2">GTP hydrolase that promotes the GTP-dependent binding of aminoacyl-tRNA to the A-site of ribosomes during protein biosynthesis.</text>
</comment>
<comment type="catalytic activity">
    <reaction evidence="2">
        <text>GTP + H2O = GDP + phosphate + H(+)</text>
        <dbReference type="Rhea" id="RHEA:19669"/>
        <dbReference type="ChEBI" id="CHEBI:15377"/>
        <dbReference type="ChEBI" id="CHEBI:15378"/>
        <dbReference type="ChEBI" id="CHEBI:37565"/>
        <dbReference type="ChEBI" id="CHEBI:43474"/>
        <dbReference type="ChEBI" id="CHEBI:58189"/>
        <dbReference type="EC" id="3.6.5.3"/>
    </reaction>
    <physiologicalReaction direction="left-to-right" evidence="2">
        <dbReference type="Rhea" id="RHEA:19670"/>
    </physiologicalReaction>
</comment>
<comment type="subunit">
    <text evidence="2">Monomer.</text>
</comment>
<comment type="subcellular location">
    <subcellularLocation>
        <location evidence="2">Cytoplasm</location>
    </subcellularLocation>
</comment>
<comment type="similarity">
    <text evidence="2">Belongs to the TRAFAC class translation factor GTPase superfamily. Classic translation factor GTPase family. EF-Tu/EF-1A subfamily.</text>
</comment>
<organism>
    <name type="scientific">Saccharophagus degradans (strain 2-40 / ATCC 43961 / DSM 17024)</name>
    <dbReference type="NCBI Taxonomy" id="203122"/>
    <lineage>
        <taxon>Bacteria</taxon>
        <taxon>Pseudomonadati</taxon>
        <taxon>Pseudomonadota</taxon>
        <taxon>Gammaproteobacteria</taxon>
        <taxon>Cellvibrionales</taxon>
        <taxon>Cellvibrionaceae</taxon>
        <taxon>Saccharophagus</taxon>
    </lineage>
</organism>
<protein>
    <recommendedName>
        <fullName evidence="2">Elongation factor Tu</fullName>
        <shortName evidence="2">EF-Tu</shortName>
        <ecNumber evidence="2">3.6.5.3</ecNumber>
    </recommendedName>
</protein>
<proteinExistence type="inferred from homology"/>
<keyword id="KW-0963">Cytoplasm</keyword>
<keyword id="KW-0251">Elongation factor</keyword>
<keyword id="KW-0342">GTP-binding</keyword>
<keyword id="KW-0378">Hydrolase</keyword>
<keyword id="KW-0460">Magnesium</keyword>
<keyword id="KW-0479">Metal-binding</keyword>
<keyword id="KW-0547">Nucleotide-binding</keyword>
<keyword id="KW-0648">Protein biosynthesis</keyword>
<keyword id="KW-1185">Reference proteome</keyword>